<comment type="function">
    <text evidence="1">Found at the monomer-monomer interface of the photosystem II (PS II) dimer, plays a role in assembly and dimerization of PSII. PSII is a light-driven water plastoquinone oxidoreductase, using light energy to abstract electrons from H(2)O, generating a proton gradient subsequently used for ATP formation.</text>
</comment>
<comment type="subunit">
    <text evidence="1">PSII is composed of 1 copy each of membrane proteins PsbA, PsbB, PsbC, PsbD, PsbE, PsbF, PsbH, PsbI, PsbJ, PsbK, PsbL, PsbM, PsbT, PsbY, PsbZ, Psb30/Ycf12, at least 3 peripheral proteins of the oxygen-evolving complex and a large number of cofactors. It forms dimeric complexes.</text>
</comment>
<comment type="subcellular location">
    <subcellularLocation>
        <location evidence="1">Plastid</location>
        <location evidence="1">Chloroplast thylakoid membrane</location>
        <topology evidence="1">Single-pass membrane protein</topology>
    </subcellularLocation>
</comment>
<comment type="similarity">
    <text evidence="1">Belongs to the PsbT family.</text>
</comment>
<name>PSBT_TAXBR</name>
<gene>
    <name evidence="1" type="primary">psbT</name>
</gene>
<dbReference type="EMBL" id="AF528916">
    <property type="protein sequence ID" value="AAQ09449.1"/>
    <property type="molecule type" value="Genomic_DNA"/>
</dbReference>
<dbReference type="RefSeq" id="YP_009578764.1">
    <property type="nucleotide sequence ID" value="NC_041502.1"/>
</dbReference>
<dbReference type="SMR" id="Q6EYC4"/>
<dbReference type="GeneID" id="39704593"/>
<dbReference type="GO" id="GO:0009535">
    <property type="term" value="C:chloroplast thylakoid membrane"/>
    <property type="evidence" value="ECO:0007669"/>
    <property type="project" value="UniProtKB-SubCell"/>
</dbReference>
<dbReference type="GO" id="GO:0009539">
    <property type="term" value="C:photosystem II reaction center"/>
    <property type="evidence" value="ECO:0007669"/>
    <property type="project" value="InterPro"/>
</dbReference>
<dbReference type="GO" id="GO:0015979">
    <property type="term" value="P:photosynthesis"/>
    <property type="evidence" value="ECO:0007669"/>
    <property type="project" value="UniProtKB-UniRule"/>
</dbReference>
<dbReference type="HAMAP" id="MF_00808">
    <property type="entry name" value="PSII_PsbT"/>
    <property type="match status" value="1"/>
</dbReference>
<dbReference type="InterPro" id="IPR001743">
    <property type="entry name" value="PSII_PsbT"/>
</dbReference>
<dbReference type="InterPro" id="IPR037268">
    <property type="entry name" value="PSII_PsbT_sf"/>
</dbReference>
<dbReference type="PANTHER" id="PTHR36411">
    <property type="match status" value="1"/>
</dbReference>
<dbReference type="PANTHER" id="PTHR36411:SF2">
    <property type="entry name" value="PHOTOSYSTEM II REACTION CENTER PROTEIN T"/>
    <property type="match status" value="1"/>
</dbReference>
<dbReference type="Pfam" id="PF01405">
    <property type="entry name" value="PsbT"/>
    <property type="match status" value="1"/>
</dbReference>
<dbReference type="SUPFAM" id="SSF161029">
    <property type="entry name" value="Photosystem II reaction center protein T, PsbT"/>
    <property type="match status" value="1"/>
</dbReference>
<feature type="chain" id="PRO_0000217989" description="Photosystem II reaction center protein T">
    <location>
        <begin position="1"/>
        <end position="35"/>
    </location>
</feature>
<feature type="transmembrane region" description="Helical" evidence="1">
    <location>
        <begin position="3"/>
        <end position="23"/>
    </location>
</feature>
<protein>
    <recommendedName>
        <fullName evidence="1">Photosystem II reaction center protein T</fullName>
        <shortName evidence="1">PSII-T</shortName>
    </recommendedName>
</protein>
<organism>
    <name type="scientific">Taxus brevifolia</name>
    <name type="common">Pacific yew</name>
    <dbReference type="NCBI Taxonomy" id="46220"/>
    <lineage>
        <taxon>Eukaryota</taxon>
        <taxon>Viridiplantae</taxon>
        <taxon>Streptophyta</taxon>
        <taxon>Embryophyta</taxon>
        <taxon>Tracheophyta</taxon>
        <taxon>Spermatophyta</taxon>
        <taxon>Pinopsida</taxon>
        <taxon>Pinidae</taxon>
        <taxon>Conifers II</taxon>
        <taxon>Cupressales</taxon>
        <taxon>Taxaceae</taxon>
        <taxon>Taxus</taxon>
    </lineage>
</organism>
<sequence>MEALVYTFLLVSTLGIIFFAIFFREPPKVPDRGGK</sequence>
<accession>Q6EYC4</accession>
<reference key="1">
    <citation type="submission" date="2002-07" db="EMBL/GenBank/DDBJ databases">
        <title>Parsing out signal and noise for seed-plant phylogenetic inference.</title>
        <authorList>
            <person name="Graham S.W."/>
            <person name="Rai H.S."/>
            <person name="Ikegami K."/>
            <person name="Reeves P.A."/>
            <person name="Olmstead R.G."/>
        </authorList>
    </citation>
    <scope>NUCLEOTIDE SEQUENCE [GENOMIC DNA]</scope>
</reference>
<proteinExistence type="inferred from homology"/>
<geneLocation type="chloroplast"/>
<keyword id="KW-0150">Chloroplast</keyword>
<keyword id="KW-0472">Membrane</keyword>
<keyword id="KW-0602">Photosynthesis</keyword>
<keyword id="KW-0604">Photosystem II</keyword>
<keyword id="KW-0934">Plastid</keyword>
<keyword id="KW-0793">Thylakoid</keyword>
<keyword id="KW-0812">Transmembrane</keyword>
<keyword id="KW-1133">Transmembrane helix</keyword>
<evidence type="ECO:0000255" key="1">
    <source>
        <dbReference type="HAMAP-Rule" id="MF_00808"/>
    </source>
</evidence>